<dbReference type="EMBL" id="AF188935">
    <property type="protein sequence ID" value="AAF13620.1"/>
    <property type="molecule type" value="Genomic_DNA"/>
</dbReference>
<dbReference type="EMBL" id="AE011191">
    <property type="protein sequence ID" value="AAM26175.1"/>
    <property type="molecule type" value="Genomic_DNA"/>
</dbReference>
<dbReference type="EMBL" id="AE017335">
    <property type="status" value="NOT_ANNOTATED_CDS"/>
    <property type="molecule type" value="Genomic_DNA"/>
</dbReference>
<dbReference type="RefSeq" id="NP_053170.1">
    <property type="nucleotide sequence ID" value="NC_002146.1"/>
</dbReference>
<dbReference type="TCDB" id="3.A.7.13.1">
    <property type="family name" value="the type iv (conjugal dna-protein transfer or virb) secretory pathway (ivsp) family"/>
</dbReference>
<dbReference type="KEGG" id="banh:HYU01_29070"/>
<dbReference type="HOGENOM" id="CLU_1206984_0_0_9"/>
<dbReference type="Proteomes" id="UP000000594">
    <property type="component" value="Plasmid pXO2"/>
</dbReference>
<dbReference type="CDD" id="cd01127">
    <property type="entry name" value="TrwB_TraG_TraD_VirD4"/>
    <property type="match status" value="1"/>
</dbReference>
<dbReference type="Gene3D" id="3.40.50.300">
    <property type="entry name" value="P-loop containing nucleotide triphosphate hydrolases"/>
    <property type="match status" value="1"/>
</dbReference>
<dbReference type="InterPro" id="IPR027417">
    <property type="entry name" value="P-loop_NTPase"/>
</dbReference>
<dbReference type="InterPro" id="IPR032689">
    <property type="entry name" value="TraG-D_C"/>
</dbReference>
<dbReference type="Pfam" id="PF12696">
    <property type="entry name" value="TraG-D_C"/>
    <property type="match status" value="1"/>
</dbReference>
<geneLocation type="plasmid">
    <name>pXO2</name>
</geneLocation>
<accession>Q9RN17</accession>
<accession>Q8KYG5</accession>
<protein>
    <recommendedName>
        <fullName>Uncharacterized protein pXO2-15/BXB0014/GBAA_pXO2_0014</fullName>
    </recommendedName>
</protein>
<proteinExistence type="predicted"/>
<sequence>MLFNLVLQSYSQIEKLYDKEATEIKDNCQNHIYIMSTNKDTIEEISHRAGHKTVIGKSSNESHLETDNKITKNADQQRIISPERLAQFIEGETLLLRALHRQDLKRKKVRAYPILNTRETSMPYRWQFLGKDFDTSKDLNEIDIPSLHTGLDLTDLYLNFLDFIVNPVAKKEYIKKQQSNPVVKTEPIDINEIIKALIGLVKEKRNRNNSEDIQKRLVQMLLDYATDTIFPKTEEVEFLIEHSSDNEMKRHLEKLLDMLKKIDLKLGGKVEK</sequence>
<evidence type="ECO:0000305" key="1"/>
<feature type="chain" id="PRO_0000216836" description="Uncharacterized protein pXO2-15/BXB0014/GBAA_pXO2_0014">
    <location>
        <begin position="1"/>
        <end position="272"/>
    </location>
</feature>
<feature type="sequence conflict" description="In Ref. 1; AAF13620." evidence="1" ref="1">
    <original>IDLKLGGKVEK</original>
    <variation>LI</variation>
    <location>
        <begin position="262"/>
        <end position="272"/>
    </location>
</feature>
<name>Y6514_BACAN</name>
<keyword id="KW-0614">Plasmid</keyword>
<keyword id="KW-1185">Reference proteome</keyword>
<organism>
    <name type="scientific">Bacillus anthracis</name>
    <dbReference type="NCBI Taxonomy" id="1392"/>
    <lineage>
        <taxon>Bacteria</taxon>
        <taxon>Bacillati</taxon>
        <taxon>Bacillota</taxon>
        <taxon>Bacilli</taxon>
        <taxon>Bacillales</taxon>
        <taxon>Bacillaceae</taxon>
        <taxon>Bacillus</taxon>
        <taxon>Bacillus cereus group</taxon>
    </lineage>
</organism>
<reference key="1">
    <citation type="journal article" date="1999" name="J. Appl. Microbiol.">
        <title>Sequence, assembly and analysis of pXO1 and pXO2.</title>
        <authorList>
            <person name="Okinaka R.T."/>
            <person name="Cloud K."/>
            <person name="Hampton O."/>
            <person name="Hoffmaster A."/>
            <person name="Hill K.K."/>
            <person name="Keim P."/>
            <person name="Koehler T."/>
            <person name="Lamke G."/>
            <person name="Kumano S."/>
            <person name="Manter D."/>
            <person name="Martinez Y."/>
            <person name="Ricke D."/>
            <person name="Svensson R."/>
            <person name="Jackson P.J."/>
        </authorList>
    </citation>
    <scope>NUCLEOTIDE SEQUENCE [GENOMIC DNA]</scope>
    <source>
        <strain>Pasteur</strain>
    </source>
</reference>
<reference key="2">
    <citation type="journal article" date="2002" name="Science">
        <title>Comparative genome sequencing for discovery of novel polymorphisms in Bacillus anthracis.</title>
        <authorList>
            <person name="Read T.D."/>
            <person name="Salzberg S.L."/>
            <person name="Pop M."/>
            <person name="Shumway M.F."/>
            <person name="Umayam L."/>
            <person name="Jiang L."/>
            <person name="Holtzapple E."/>
            <person name="Busch J.D."/>
            <person name="Smith K.L."/>
            <person name="Schupp J.M."/>
            <person name="Solomon D."/>
            <person name="Keim P."/>
            <person name="Fraser C.M."/>
        </authorList>
    </citation>
    <scope>NUCLEOTIDE SEQUENCE [GENOMIC DNA]</scope>
    <source>
        <strain>Ames / isolate Florida / A2012</strain>
    </source>
</reference>
<reference key="3">
    <citation type="journal article" date="2009" name="J. Bacteriol.">
        <title>The complete genome sequence of Bacillus anthracis Ames 'Ancestor'.</title>
        <authorList>
            <person name="Ravel J."/>
            <person name="Jiang L."/>
            <person name="Stanley S.T."/>
            <person name="Wilson M.R."/>
            <person name="Decker R.S."/>
            <person name="Read T.D."/>
            <person name="Worsham P."/>
            <person name="Keim P.S."/>
            <person name="Salzberg S.L."/>
            <person name="Fraser-Liggett C.M."/>
            <person name="Rasko D.A."/>
        </authorList>
    </citation>
    <scope>NUCLEOTIDE SEQUENCE [LARGE SCALE GENOMIC DNA]</scope>
    <source>
        <strain>Ames ancestor</strain>
    </source>
</reference>
<gene>
    <name type="ordered locus">pXO2-15</name>
    <name type="ordered locus">BXB0014</name>
    <name type="ordered locus">GBAA_pXO2_0014</name>
</gene>